<keyword id="KW-0963">Cytoplasm</keyword>
<keyword id="KW-0489">Methyltransferase</keyword>
<keyword id="KW-0698">rRNA processing</keyword>
<keyword id="KW-0949">S-adenosyl-L-methionine</keyword>
<keyword id="KW-0808">Transferase</keyword>
<reference key="1">
    <citation type="journal article" date="2009" name="PLoS Genet.">
        <title>Organised genome dynamics in the Escherichia coli species results in highly diverse adaptive paths.</title>
        <authorList>
            <person name="Touchon M."/>
            <person name="Hoede C."/>
            <person name="Tenaillon O."/>
            <person name="Barbe V."/>
            <person name="Baeriswyl S."/>
            <person name="Bidet P."/>
            <person name="Bingen E."/>
            <person name="Bonacorsi S."/>
            <person name="Bouchier C."/>
            <person name="Bouvet O."/>
            <person name="Calteau A."/>
            <person name="Chiapello H."/>
            <person name="Clermont O."/>
            <person name="Cruveiller S."/>
            <person name="Danchin A."/>
            <person name="Diard M."/>
            <person name="Dossat C."/>
            <person name="Karoui M.E."/>
            <person name="Frapy E."/>
            <person name="Garry L."/>
            <person name="Ghigo J.M."/>
            <person name="Gilles A.M."/>
            <person name="Johnson J."/>
            <person name="Le Bouguenec C."/>
            <person name="Lescat M."/>
            <person name="Mangenot S."/>
            <person name="Martinez-Jehanne V."/>
            <person name="Matic I."/>
            <person name="Nassif X."/>
            <person name="Oztas S."/>
            <person name="Petit M.A."/>
            <person name="Pichon C."/>
            <person name="Rouy Z."/>
            <person name="Ruf C.S."/>
            <person name="Schneider D."/>
            <person name="Tourret J."/>
            <person name="Vacherie B."/>
            <person name="Vallenet D."/>
            <person name="Medigue C."/>
            <person name="Rocha E.P.C."/>
            <person name="Denamur E."/>
        </authorList>
    </citation>
    <scope>NUCLEOTIDE SEQUENCE [LARGE SCALE GENOMIC DNA]</scope>
    <source>
        <strain>UMN026 / ExPEC</strain>
    </source>
</reference>
<evidence type="ECO:0000255" key="1">
    <source>
        <dbReference type="HAMAP-Rule" id="MF_01551"/>
    </source>
</evidence>
<gene>
    <name evidence="1" type="primary">rlmM</name>
    <name type="ordered locus">ECUMN_3135</name>
</gene>
<proteinExistence type="inferred from homology"/>
<name>RLMM_ECOLU</name>
<sequence>MNKVVLLCRPGFEKECAAEITDKAGQREIFGFARVKENAGYVIYECYQPDDGDKLIRELPFSSLIFARQWFVVGELLQHLPPEDRITPIVGMLQGVVEKGGELRVEVADTNESKELLKFCRKFTVPLRAALRDAGVLANYETPKRPVVHVFFIAPGCCYTGYSYSNNNSPFYMGIPRLKFPADAPSRSTLKLEEAFHVFIPADEWDERLANGMWAVDLGACPGGWTYQLVKRNMWVYSVDNGPMAQSLMDTGQVTWLREDGFKFRPTRSNISWMVCDMVEKPAKVAALMAQWLVNGWCRETIFNLKLPMKKRYEEVSHNLAYIQAQLDEHGINAQIQARQLYHDREEVTVHVRRIWAAVGGRRDER</sequence>
<organism>
    <name type="scientific">Escherichia coli O17:K52:H18 (strain UMN026 / ExPEC)</name>
    <dbReference type="NCBI Taxonomy" id="585056"/>
    <lineage>
        <taxon>Bacteria</taxon>
        <taxon>Pseudomonadati</taxon>
        <taxon>Pseudomonadota</taxon>
        <taxon>Gammaproteobacteria</taxon>
        <taxon>Enterobacterales</taxon>
        <taxon>Enterobacteriaceae</taxon>
        <taxon>Escherichia</taxon>
    </lineage>
</organism>
<dbReference type="EC" id="2.1.1.186" evidence="1"/>
<dbReference type="EMBL" id="CU928163">
    <property type="protein sequence ID" value="CAR14301.1"/>
    <property type="molecule type" value="Genomic_DNA"/>
</dbReference>
<dbReference type="RefSeq" id="WP_001045520.1">
    <property type="nucleotide sequence ID" value="NC_011751.1"/>
</dbReference>
<dbReference type="RefSeq" id="YP_002413821.1">
    <property type="nucleotide sequence ID" value="NC_011751.1"/>
</dbReference>
<dbReference type="SMR" id="B7N740"/>
<dbReference type="STRING" id="585056.ECUMN_3135"/>
<dbReference type="GeneID" id="75203803"/>
<dbReference type="KEGG" id="eum:ECUMN_3135"/>
<dbReference type="PATRIC" id="fig|585056.7.peg.3317"/>
<dbReference type="HOGENOM" id="CLU_043780_0_0_6"/>
<dbReference type="Proteomes" id="UP000007097">
    <property type="component" value="Chromosome"/>
</dbReference>
<dbReference type="GO" id="GO:0005737">
    <property type="term" value="C:cytoplasm"/>
    <property type="evidence" value="ECO:0007669"/>
    <property type="project" value="UniProtKB-SubCell"/>
</dbReference>
<dbReference type="GO" id="GO:0008757">
    <property type="term" value="F:S-adenosylmethionine-dependent methyltransferase activity"/>
    <property type="evidence" value="ECO:0007669"/>
    <property type="project" value="UniProtKB-UniRule"/>
</dbReference>
<dbReference type="GO" id="GO:0032259">
    <property type="term" value="P:methylation"/>
    <property type="evidence" value="ECO:0007669"/>
    <property type="project" value="UniProtKB-KW"/>
</dbReference>
<dbReference type="GO" id="GO:0006364">
    <property type="term" value="P:rRNA processing"/>
    <property type="evidence" value="ECO:0007669"/>
    <property type="project" value="UniProtKB-UniRule"/>
</dbReference>
<dbReference type="FunFam" id="3.30.2300.20:FF:000001">
    <property type="entry name" value="Ribosomal RNA large subunit methyltransferase M"/>
    <property type="match status" value="1"/>
</dbReference>
<dbReference type="FunFam" id="3.30.70.2810:FF:000001">
    <property type="entry name" value="Ribosomal RNA large subunit methyltransferase M"/>
    <property type="match status" value="1"/>
</dbReference>
<dbReference type="FunFam" id="3.40.50.150:FF:000020">
    <property type="entry name" value="Ribosomal RNA large subunit methyltransferase M"/>
    <property type="match status" value="1"/>
</dbReference>
<dbReference type="Gene3D" id="3.30.2300.20">
    <property type="match status" value="1"/>
</dbReference>
<dbReference type="Gene3D" id="3.30.70.2810">
    <property type="match status" value="1"/>
</dbReference>
<dbReference type="Gene3D" id="3.40.50.150">
    <property type="entry name" value="Vaccinia Virus protein VP39"/>
    <property type="match status" value="1"/>
</dbReference>
<dbReference type="HAMAP" id="MF_01551">
    <property type="entry name" value="23SrRNA_methyltr_M"/>
    <property type="match status" value="1"/>
</dbReference>
<dbReference type="InterPro" id="IPR040739">
    <property type="entry name" value="RlmM_FDX"/>
</dbReference>
<dbReference type="InterPro" id="IPR048646">
    <property type="entry name" value="RlmM_THUMP-like"/>
</dbReference>
<dbReference type="InterPro" id="IPR002877">
    <property type="entry name" value="RNA_MeTrfase_FtsJ_dom"/>
</dbReference>
<dbReference type="InterPro" id="IPR011224">
    <property type="entry name" value="rRNA_MeTrfase_M"/>
</dbReference>
<dbReference type="InterPro" id="IPR029063">
    <property type="entry name" value="SAM-dependent_MTases_sf"/>
</dbReference>
<dbReference type="NCBIfam" id="NF008734">
    <property type="entry name" value="PRK11760.1"/>
    <property type="match status" value="1"/>
</dbReference>
<dbReference type="PANTHER" id="PTHR37524">
    <property type="entry name" value="RIBOSOMAL RNA LARGE SUBUNIT METHYLTRANSFERASE M"/>
    <property type="match status" value="1"/>
</dbReference>
<dbReference type="PANTHER" id="PTHR37524:SF2">
    <property type="entry name" value="RIBOSOMAL RNA METHYLTRANSFERASE FTSJ DOMAIN-CONTAINING PROTEIN"/>
    <property type="match status" value="1"/>
</dbReference>
<dbReference type="Pfam" id="PF01728">
    <property type="entry name" value="FtsJ"/>
    <property type="match status" value="1"/>
</dbReference>
<dbReference type="Pfam" id="PF18125">
    <property type="entry name" value="RlmM_FDX"/>
    <property type="match status" value="1"/>
</dbReference>
<dbReference type="Pfam" id="PF21239">
    <property type="entry name" value="RLMM_N"/>
    <property type="match status" value="1"/>
</dbReference>
<dbReference type="PIRSF" id="PIRSF028774">
    <property type="entry name" value="UCP028774"/>
    <property type="match status" value="1"/>
</dbReference>
<dbReference type="SUPFAM" id="SSF53335">
    <property type="entry name" value="S-adenosyl-L-methionine-dependent methyltransferases"/>
    <property type="match status" value="1"/>
</dbReference>
<feature type="chain" id="PRO_1000201516" description="Ribosomal RNA large subunit methyltransferase M">
    <location>
        <begin position="1"/>
        <end position="366"/>
    </location>
</feature>
<feature type="active site" description="Proton acceptor" evidence="1">
    <location>
        <position position="306"/>
    </location>
</feature>
<feature type="binding site" evidence="1">
    <location>
        <position position="188"/>
    </location>
    <ligand>
        <name>S-adenosyl-L-methionine</name>
        <dbReference type="ChEBI" id="CHEBI:59789"/>
    </ligand>
</feature>
<feature type="binding site" evidence="1">
    <location>
        <begin position="221"/>
        <end position="224"/>
    </location>
    <ligand>
        <name>S-adenosyl-L-methionine</name>
        <dbReference type="ChEBI" id="CHEBI:59789"/>
    </ligand>
</feature>
<feature type="binding site" evidence="1">
    <location>
        <position position="240"/>
    </location>
    <ligand>
        <name>S-adenosyl-L-methionine</name>
        <dbReference type="ChEBI" id="CHEBI:59789"/>
    </ligand>
</feature>
<feature type="binding site" evidence="1">
    <location>
        <position position="260"/>
    </location>
    <ligand>
        <name>S-adenosyl-L-methionine</name>
        <dbReference type="ChEBI" id="CHEBI:59789"/>
    </ligand>
</feature>
<feature type="binding site" evidence="1">
    <location>
        <position position="277"/>
    </location>
    <ligand>
        <name>S-adenosyl-L-methionine</name>
        <dbReference type="ChEBI" id="CHEBI:59789"/>
    </ligand>
</feature>
<protein>
    <recommendedName>
        <fullName evidence="1">Ribosomal RNA large subunit methyltransferase M</fullName>
        <ecNumber evidence="1">2.1.1.186</ecNumber>
    </recommendedName>
    <alternativeName>
        <fullName evidence="1">23S rRNA (cytidine2498-2'-O)-methyltransferase</fullName>
    </alternativeName>
    <alternativeName>
        <fullName evidence="1">23S rRNA 2'-O-ribose methyltransferase RlmM</fullName>
    </alternativeName>
</protein>
<comment type="function">
    <text evidence="1">Catalyzes the 2'-O-methylation at nucleotide C2498 in 23S rRNA.</text>
</comment>
<comment type="catalytic activity">
    <reaction evidence="1">
        <text>cytidine(2498) in 23S rRNA + S-adenosyl-L-methionine = 2'-O-methylcytidine(2498) in 23S rRNA + S-adenosyl-L-homocysteine + H(+)</text>
        <dbReference type="Rhea" id="RHEA:42788"/>
        <dbReference type="Rhea" id="RHEA-COMP:10244"/>
        <dbReference type="Rhea" id="RHEA-COMP:10245"/>
        <dbReference type="ChEBI" id="CHEBI:15378"/>
        <dbReference type="ChEBI" id="CHEBI:57856"/>
        <dbReference type="ChEBI" id="CHEBI:59789"/>
        <dbReference type="ChEBI" id="CHEBI:74495"/>
        <dbReference type="ChEBI" id="CHEBI:82748"/>
        <dbReference type="EC" id="2.1.1.186"/>
    </reaction>
</comment>
<comment type="subunit">
    <text evidence="1">Monomer.</text>
</comment>
<comment type="subcellular location">
    <subcellularLocation>
        <location evidence="1">Cytoplasm</location>
    </subcellularLocation>
</comment>
<comment type="similarity">
    <text evidence="1">Belongs to the class I-like SAM-binding methyltransferase superfamily. RNA methyltransferase RlmE family. RlmM subfamily.</text>
</comment>
<accession>B7N740</accession>